<evidence type="ECO:0000255" key="1">
    <source>
        <dbReference type="HAMAP-Rule" id="MF_00502"/>
    </source>
</evidence>
<evidence type="ECO:0000305" key="2"/>
<gene>
    <name evidence="1" type="primary">rpmE2</name>
    <name type="ordered locus">Bcenmc03_1857</name>
</gene>
<sequence length="88" mass="9969">MKPGIHPDYREVVFQDMSNGFKFITRSTIQTRETIEHEGKTYPLAKIEVSSESHSFYTGQQKIMDTAGRVEKFKNKFGARANGKAAAK</sequence>
<feature type="chain" id="PRO_1000126789" description="Large ribosomal subunit protein bL31B">
    <location>
        <begin position="1"/>
        <end position="88"/>
    </location>
</feature>
<comment type="subunit">
    <text evidence="1">Part of the 50S ribosomal subunit.</text>
</comment>
<comment type="similarity">
    <text evidence="1">Belongs to the bacterial ribosomal protein bL31 family. Type B subfamily.</text>
</comment>
<dbReference type="EMBL" id="CP000958">
    <property type="protein sequence ID" value="ACA91018.1"/>
    <property type="molecule type" value="Genomic_DNA"/>
</dbReference>
<dbReference type="RefSeq" id="WP_011549676.1">
    <property type="nucleotide sequence ID" value="NC_010508.1"/>
</dbReference>
<dbReference type="SMR" id="B1JTB3"/>
<dbReference type="GeneID" id="83048630"/>
<dbReference type="KEGG" id="bcm:Bcenmc03_1857"/>
<dbReference type="HOGENOM" id="CLU_114306_2_1_4"/>
<dbReference type="Proteomes" id="UP000002169">
    <property type="component" value="Chromosome 1"/>
</dbReference>
<dbReference type="GO" id="GO:1990904">
    <property type="term" value="C:ribonucleoprotein complex"/>
    <property type="evidence" value="ECO:0007669"/>
    <property type="project" value="UniProtKB-KW"/>
</dbReference>
<dbReference type="GO" id="GO:0005840">
    <property type="term" value="C:ribosome"/>
    <property type="evidence" value="ECO:0007669"/>
    <property type="project" value="UniProtKB-KW"/>
</dbReference>
<dbReference type="GO" id="GO:0003735">
    <property type="term" value="F:structural constituent of ribosome"/>
    <property type="evidence" value="ECO:0007669"/>
    <property type="project" value="InterPro"/>
</dbReference>
<dbReference type="GO" id="GO:0006412">
    <property type="term" value="P:translation"/>
    <property type="evidence" value="ECO:0007669"/>
    <property type="project" value="UniProtKB-UniRule"/>
</dbReference>
<dbReference type="Gene3D" id="4.10.830.30">
    <property type="entry name" value="Ribosomal protein L31"/>
    <property type="match status" value="1"/>
</dbReference>
<dbReference type="HAMAP" id="MF_00502">
    <property type="entry name" value="Ribosomal_bL31_2"/>
    <property type="match status" value="1"/>
</dbReference>
<dbReference type="InterPro" id="IPR034704">
    <property type="entry name" value="Ribosomal_bL28/bL31-like_sf"/>
</dbReference>
<dbReference type="InterPro" id="IPR002150">
    <property type="entry name" value="Ribosomal_bL31"/>
</dbReference>
<dbReference type="InterPro" id="IPR027493">
    <property type="entry name" value="Ribosomal_bL31_B"/>
</dbReference>
<dbReference type="InterPro" id="IPR042105">
    <property type="entry name" value="Ribosomal_bL31_sf"/>
</dbReference>
<dbReference type="NCBIfam" id="TIGR00105">
    <property type="entry name" value="L31"/>
    <property type="match status" value="1"/>
</dbReference>
<dbReference type="NCBIfam" id="NF002462">
    <property type="entry name" value="PRK01678.1"/>
    <property type="match status" value="1"/>
</dbReference>
<dbReference type="PANTHER" id="PTHR33280">
    <property type="entry name" value="50S RIBOSOMAL PROTEIN L31, CHLOROPLASTIC"/>
    <property type="match status" value="1"/>
</dbReference>
<dbReference type="PANTHER" id="PTHR33280:SF1">
    <property type="entry name" value="LARGE RIBOSOMAL SUBUNIT PROTEIN BL31C"/>
    <property type="match status" value="1"/>
</dbReference>
<dbReference type="Pfam" id="PF01197">
    <property type="entry name" value="Ribosomal_L31"/>
    <property type="match status" value="1"/>
</dbReference>
<dbReference type="PRINTS" id="PR01249">
    <property type="entry name" value="RIBOSOMALL31"/>
</dbReference>
<dbReference type="SUPFAM" id="SSF143800">
    <property type="entry name" value="L28p-like"/>
    <property type="match status" value="1"/>
</dbReference>
<accession>B1JTB3</accession>
<keyword id="KW-0687">Ribonucleoprotein</keyword>
<keyword id="KW-0689">Ribosomal protein</keyword>
<organism>
    <name type="scientific">Burkholderia orbicola (strain MC0-3)</name>
    <dbReference type="NCBI Taxonomy" id="406425"/>
    <lineage>
        <taxon>Bacteria</taxon>
        <taxon>Pseudomonadati</taxon>
        <taxon>Pseudomonadota</taxon>
        <taxon>Betaproteobacteria</taxon>
        <taxon>Burkholderiales</taxon>
        <taxon>Burkholderiaceae</taxon>
        <taxon>Burkholderia</taxon>
        <taxon>Burkholderia cepacia complex</taxon>
        <taxon>Burkholderia orbicola</taxon>
    </lineage>
</organism>
<protein>
    <recommendedName>
        <fullName evidence="1">Large ribosomal subunit protein bL31B</fullName>
    </recommendedName>
    <alternativeName>
        <fullName evidence="2">50S ribosomal protein L31 type B</fullName>
    </alternativeName>
</protein>
<name>RL31B_BURO0</name>
<reference key="1">
    <citation type="submission" date="2008-02" db="EMBL/GenBank/DDBJ databases">
        <title>Complete sequence of chromosome 1 of Burkholderia cenocepacia MC0-3.</title>
        <authorList>
            <person name="Copeland A."/>
            <person name="Lucas S."/>
            <person name="Lapidus A."/>
            <person name="Barry K."/>
            <person name="Bruce D."/>
            <person name="Goodwin L."/>
            <person name="Glavina del Rio T."/>
            <person name="Dalin E."/>
            <person name="Tice H."/>
            <person name="Pitluck S."/>
            <person name="Chain P."/>
            <person name="Malfatti S."/>
            <person name="Shin M."/>
            <person name="Vergez L."/>
            <person name="Schmutz J."/>
            <person name="Larimer F."/>
            <person name="Land M."/>
            <person name="Hauser L."/>
            <person name="Kyrpides N."/>
            <person name="Mikhailova N."/>
            <person name="Tiedje J."/>
            <person name="Richardson P."/>
        </authorList>
    </citation>
    <scope>NUCLEOTIDE SEQUENCE [LARGE SCALE GENOMIC DNA]</scope>
    <source>
        <strain>MC0-3</strain>
    </source>
</reference>
<proteinExistence type="inferred from homology"/>